<accession>Q8U195</accession>
<accession>Q9UWJ4</accession>
<dbReference type="EC" id="1.8.1.19" evidence="3 4"/>
<dbReference type="EC" id="1.18.1.2" evidence="3 4"/>
<dbReference type="EMBL" id="AE009950">
    <property type="protein sequence ID" value="AAL81451.1"/>
    <property type="molecule type" value="Genomic_DNA"/>
</dbReference>
<dbReference type="PDB" id="5JCA">
    <property type="method" value="X-ray"/>
    <property type="resolution" value="1.50 A"/>
    <property type="chains" value="L=1-474"/>
</dbReference>
<dbReference type="PDB" id="5JFC">
    <property type="method" value="X-ray"/>
    <property type="resolution" value="1.60 A"/>
    <property type="chains" value="L=1-474"/>
</dbReference>
<dbReference type="PDBsum" id="5JCA"/>
<dbReference type="PDBsum" id="5JFC"/>
<dbReference type="SMR" id="Q8U195"/>
<dbReference type="STRING" id="186497.PF1327"/>
<dbReference type="PaxDb" id="186497-PF1327"/>
<dbReference type="KEGG" id="pfu:PF1327"/>
<dbReference type="PATRIC" id="fig|186497.12.peg.1390"/>
<dbReference type="eggNOG" id="arCOG01292">
    <property type="taxonomic scope" value="Archaea"/>
</dbReference>
<dbReference type="HOGENOM" id="CLU_000422_3_3_2"/>
<dbReference type="OrthoDB" id="27922at2157"/>
<dbReference type="PhylomeDB" id="Q8U195"/>
<dbReference type="BRENDA" id="1.6.1.4">
    <property type="organism ID" value="5243"/>
</dbReference>
<dbReference type="BRENDA" id="1.8.1.19">
    <property type="organism ID" value="5243"/>
</dbReference>
<dbReference type="Proteomes" id="UP000001013">
    <property type="component" value="Chromosome"/>
</dbReference>
<dbReference type="GO" id="GO:0005737">
    <property type="term" value="C:cytoplasm"/>
    <property type="evidence" value="ECO:0007669"/>
    <property type="project" value="UniProtKB-SubCell"/>
</dbReference>
<dbReference type="GO" id="GO:0051538">
    <property type="term" value="F:3 iron, 4 sulfur cluster binding"/>
    <property type="evidence" value="ECO:0007669"/>
    <property type="project" value="UniProtKB-KW"/>
</dbReference>
<dbReference type="GO" id="GO:0051539">
    <property type="term" value="F:4 iron, 4 sulfur cluster binding"/>
    <property type="evidence" value="ECO:0007669"/>
    <property type="project" value="UniProtKB-KW"/>
</dbReference>
<dbReference type="GO" id="GO:0004324">
    <property type="term" value="F:ferredoxin-NADP+ reductase activity"/>
    <property type="evidence" value="ECO:0007669"/>
    <property type="project" value="UniProtKB-EC"/>
</dbReference>
<dbReference type="GO" id="GO:0046872">
    <property type="term" value="F:metal ion binding"/>
    <property type="evidence" value="ECO:0007669"/>
    <property type="project" value="UniProtKB-KW"/>
</dbReference>
<dbReference type="Gene3D" id="1.10.1060.10">
    <property type="entry name" value="Alpha-helical ferredoxin"/>
    <property type="match status" value="1"/>
</dbReference>
<dbReference type="Gene3D" id="3.50.50.60">
    <property type="entry name" value="FAD/NAD(P)-binding domain"/>
    <property type="match status" value="1"/>
</dbReference>
<dbReference type="Gene3D" id="3.40.50.720">
    <property type="entry name" value="NAD(P)-binding Rossmann-like Domain"/>
    <property type="match status" value="1"/>
</dbReference>
<dbReference type="InterPro" id="IPR028261">
    <property type="entry name" value="DPD_II"/>
</dbReference>
<dbReference type="InterPro" id="IPR036188">
    <property type="entry name" value="FAD/NAD-bd_sf"/>
</dbReference>
<dbReference type="InterPro" id="IPR023753">
    <property type="entry name" value="FAD/NAD-binding_dom"/>
</dbReference>
<dbReference type="InterPro" id="IPR009051">
    <property type="entry name" value="Helical_ferredxn"/>
</dbReference>
<dbReference type="InterPro" id="IPR006004">
    <property type="entry name" value="SudA-like"/>
</dbReference>
<dbReference type="NCBIfam" id="TIGR01316">
    <property type="entry name" value="gltA"/>
    <property type="match status" value="1"/>
</dbReference>
<dbReference type="PANTHER" id="PTHR42783">
    <property type="entry name" value="GLUTAMATE SYNTHASE [NADPH] SMALL CHAIN"/>
    <property type="match status" value="1"/>
</dbReference>
<dbReference type="PANTHER" id="PTHR42783:SF3">
    <property type="entry name" value="GLUTAMATE SYNTHASE [NADPH] SMALL CHAIN-RELATED"/>
    <property type="match status" value="1"/>
</dbReference>
<dbReference type="Pfam" id="PF14691">
    <property type="entry name" value="Fer4_20"/>
    <property type="match status" value="1"/>
</dbReference>
<dbReference type="Pfam" id="PF07992">
    <property type="entry name" value="Pyr_redox_2"/>
    <property type="match status" value="1"/>
</dbReference>
<dbReference type="PRINTS" id="PR00368">
    <property type="entry name" value="FADPNR"/>
</dbReference>
<dbReference type="PRINTS" id="PR00411">
    <property type="entry name" value="PNDRDTASEI"/>
</dbReference>
<dbReference type="SUPFAM" id="SSF46548">
    <property type="entry name" value="alpha-helical ferredoxin"/>
    <property type="match status" value="1"/>
</dbReference>
<dbReference type="SUPFAM" id="SSF51971">
    <property type="entry name" value="Nucleotide-binding domain"/>
    <property type="match status" value="1"/>
</dbReference>
<protein>
    <recommendedName>
        <fullName evidence="6">Sulfide dehydrogenase subunit alpha</fullName>
        <shortName evidence="6">SuDH</shortName>
        <ecNumber evidence="3 4">1.8.1.19</ecNumber>
    </recommendedName>
    <alternativeName>
        <fullName evidence="7">Ferredoxin:NADP oxidoreductase</fullName>
        <shortName evidence="7">FNOR</shortName>
        <ecNumber evidence="3 4">1.18.1.2</ecNumber>
    </alternativeName>
</protein>
<comment type="function">
    <text evidence="2 3 4">A bifunctional enzyme that catalyzes the reduction of elemental sulfur or polysulfide to hydrogen sulfide with NADPH as electron donor. Also functions as a reduced ferredoxin:NADP oxidoreductase with a very high affinity for reduced ferredoxin. Exhibits a broad specificity for various physiological and non-physiological substrates with varied reduction potentials such as methyl viologen, benzyl viologen, FAD, FMN, methylene blue, 2,6-dichlorophenolindophenol (DCIP), cytochrome C and ferricyanide with highest preference for benzyl viologen. Does not reduce fumarate, succinate, nitrate, nitrite, sulfate, sulfite or protons. Does not possess any hydrogenase activity or NADPH-dependent glutamate synthase activity.</text>
</comment>
<comment type="catalytic activity">
    <reaction evidence="3 4">
        <text>n sulfur + hydrogen sulfide + NADP(+) = (n+1) sulfur + NADPH</text>
        <dbReference type="Rhea" id="RHEA:38451"/>
        <dbReference type="ChEBI" id="CHEBI:26833"/>
        <dbReference type="ChEBI" id="CHEBI:29919"/>
        <dbReference type="ChEBI" id="CHEBI:57783"/>
        <dbReference type="ChEBI" id="CHEBI:58349"/>
        <dbReference type="EC" id="1.8.1.19"/>
    </reaction>
</comment>
<comment type="catalytic activity">
    <reaction evidence="3 4">
        <text>2 reduced [2Fe-2S]-[ferredoxin] + NADP(+) + H(+) = 2 oxidized [2Fe-2S]-[ferredoxin] + NADPH</text>
        <dbReference type="Rhea" id="RHEA:20125"/>
        <dbReference type="Rhea" id="RHEA-COMP:10000"/>
        <dbReference type="Rhea" id="RHEA-COMP:10001"/>
        <dbReference type="ChEBI" id="CHEBI:15378"/>
        <dbReference type="ChEBI" id="CHEBI:33737"/>
        <dbReference type="ChEBI" id="CHEBI:33738"/>
        <dbReference type="ChEBI" id="CHEBI:57783"/>
        <dbReference type="ChEBI" id="CHEBI:58349"/>
        <dbReference type="EC" id="1.18.1.2"/>
    </reaction>
</comment>
<comment type="cofactor">
    <cofactor evidence="2 3">
        <name>FAD</name>
        <dbReference type="ChEBI" id="CHEBI:57692"/>
    </cofactor>
    <text evidence="2 3">Binds 1 FAD per subunit.</text>
</comment>
<comment type="cofactor">
    <cofactor evidence="2 3">
        <name>[3Fe-4S] cluster</name>
        <dbReference type="ChEBI" id="CHEBI:21137"/>
    </cofactor>
    <text evidence="2 3">Binds 1 [3Fe-4S] cluster.</text>
</comment>
<comment type="cofactor">
    <cofactor evidence="2 3">
        <name>[4Fe-4S] cluster</name>
        <dbReference type="ChEBI" id="CHEBI:49883"/>
    </cofactor>
    <text evidence="2 3">Binds 1 [4Fe-4S] cluster.</text>
</comment>
<comment type="biophysicochemical properties">
    <kinetics>
        <KM evidence="3 4">11 uM for NADPH (with benzyl viologen as cosubstrate at pH 9.5)</KM>
        <KM evidence="3 4">71 uM for NADH (with benzyl viologen as cosubstrate at pH 9.5)</KM>
        <KM evidence="3 4">1.25 mM for polysulfide (with NADPH as cosubstrate at pH 8.0)</KM>
        <KM evidence="3 4">125 uM for benzyl viologen (with NADPH as cosubstrate at pH 9.5)</KM>
        <KM evidence="3 4">0.7 uM for reduced ferredoxin (with NADP as cosubstrate at pH 8.0)</KM>
        <KM evidence="3 4">1.6 uM for rubredoxin (with NADPH as cosubstrate at pH 8.0)</KM>
        <KM evidence="3 4">240 uM for oxygen (with NADPH as cosubstrate at pH 10.2)</KM>
        <KM evidence="3 4">11 uM for NADPH (with benzyl viologen as cosubstrate at 80 degrees Celsius)</KM>
        <KM evidence="3 4">71 uM for NADH (with benzyl viologen as cosubstrate at 80 degrees Celsius)</KM>
        <KM evidence="3 4">1.25 mM for polysulfide (with NADPH as cosubstrate at 80 degrees Celsius)</KM>
        <KM evidence="3 4">125 uM for benzyl viologen (with NADPH as cosubstrate at 80 degrees Celsius)</KM>
        <KM evidence="3 4">1.6 uM for rubredoxin (with NADPH as cosubstrate at 80 degrees Celsius)</KM>
        <KM evidence="3 4">240 uM for oxygen (with NADPH as cosubstrate at 80 degrees Celsius)</KM>
        <KM evidence="3 4">0.7 uM for reduced ferredoxin (with NADP as cosubstrate at 80 degrees Celsius)</KM>
        <Vmax evidence="3 4">263.0 umol/min/mg enzyme with NADPH as substrate</Vmax>
        <Vmax evidence="3 4">182.0 umol/min/mg enzyme with NADH as substrate</Vmax>
        <Vmax evidence="3 4">14.0 umol/min/mg enzyme with polysulfide as substrate</Vmax>
        <Vmax evidence="3 4">278.0 umol/min/mg enzyme with benzyl viologen as substrate</Vmax>
        <Vmax evidence="3 4">8.0 umol/min/mg enzyme with reduced ferredoxin as substrate</Vmax>
        <Vmax evidence="3 4">1.0 umol/min/mg enzyme with rubredoxin as substrate</Vmax>
        <Vmax evidence="3 4">166.0 umol/min/mg enzyme with oxygen as substrate</Vmax>
        <text evidence="3">Measured for the whole complex.</text>
    </kinetics>
    <phDependence>
        <text evidence="3 4">Optimum pH is 8.0 (for polysulfide as substrate) and 10.3 (for benzyl viologen as substrate).</text>
    </phDependence>
    <temperatureDependence>
        <text evidence="3 4">Optimum temperature is 80 degrees Celsius. Has a half-life of 12 h at 95 degrees Celsius. Activity increases by 50% after incubation for several hours at 82 degrees Celsius.</text>
    </temperatureDependence>
</comment>
<comment type="subunit">
    <text evidence="3 4">Heterodimer of alpha and beta subunits.</text>
</comment>
<comment type="subcellular location">
    <subcellularLocation>
        <location evidence="3">Cytoplasm</location>
    </subcellularLocation>
</comment>
<proteinExistence type="evidence at protein level"/>
<gene>
    <name evidence="5" type="primary">sudA</name>
    <name type="ordered locus">PF1327</name>
</gene>
<evidence type="ECO:0000255" key="1"/>
<evidence type="ECO:0000269" key="2">
    <source>
    </source>
</evidence>
<evidence type="ECO:0000269" key="3">
    <source>
    </source>
</evidence>
<evidence type="ECO:0000269" key="4">
    <source ref="4"/>
</evidence>
<evidence type="ECO:0000303" key="5">
    <source>
    </source>
</evidence>
<evidence type="ECO:0000303" key="6">
    <source>
    </source>
</evidence>
<evidence type="ECO:0000303" key="7">
    <source ref="4"/>
</evidence>
<evidence type="ECO:0000305" key="8"/>
<evidence type="ECO:0007829" key="9">
    <source>
        <dbReference type="PDB" id="5JCA"/>
    </source>
</evidence>
<sequence>MPRLIKDRVPTPERSVGERVRDFGEVNLGYSWELALREAERCLQCPVEYAPCIKGCPVHINIPGFIKALRENRDNPSKAVREALRIIWRDNTLPAITGRVCPQEEQCEGACVVGKVGDPINIGKLERFVADYAREHGIDDELLLEEIKGIKRNGKKVAIIGAGPAGLTCAADLAKMGYEVTIYEALHQPGGVLIYGIPEFRLPKEIVKKELENLRRLGVKIETNVLVGKTITFEELREEYDAIFIGTGAGTPRIYPWPGVNLNGIYSANEFLTRINLMKAYKFPEYDTPIKVGKRVAVIGGGNTAMDAARSALRLGAEVWILYRRTRKEMTAREEEIKHAEEEGVKFMFLVTPKRFIGDENGNLKAIELEKMKLGEPDESGRRRPIPTGETFIMEFDTAIIAIGQTPNKTFLETVPGLKVDEWGRIVVDENLMTSIPGVFAGGDAIRGEATVILAMGDGRKAAKAIHQYLSKEK</sequence>
<organism>
    <name type="scientific">Pyrococcus furiosus (strain ATCC 43587 / DSM 3638 / JCM 8422 / Vc1)</name>
    <dbReference type="NCBI Taxonomy" id="186497"/>
    <lineage>
        <taxon>Archaea</taxon>
        <taxon>Methanobacteriati</taxon>
        <taxon>Methanobacteriota</taxon>
        <taxon>Thermococci</taxon>
        <taxon>Thermococcales</taxon>
        <taxon>Thermococcaceae</taxon>
        <taxon>Pyrococcus</taxon>
    </lineage>
</organism>
<keyword id="KW-0002">3D-structure</keyword>
<keyword id="KW-0003">3Fe-4S</keyword>
<keyword id="KW-0004">4Fe-4S</keyword>
<keyword id="KW-0963">Cytoplasm</keyword>
<keyword id="KW-0903">Direct protein sequencing</keyword>
<keyword id="KW-0274">FAD</keyword>
<keyword id="KW-0285">Flavoprotein</keyword>
<keyword id="KW-0408">Iron</keyword>
<keyword id="KW-0411">Iron-sulfur</keyword>
<keyword id="KW-0479">Metal-binding</keyword>
<keyword id="KW-0521">NADP</keyword>
<keyword id="KW-0560">Oxidoreductase</keyword>
<keyword id="KW-1185">Reference proteome</keyword>
<feature type="propeptide" id="PRO_0000420429" evidence="3">
    <location>
        <begin position="1"/>
        <end position="2"/>
    </location>
</feature>
<feature type="chain" id="PRO_0000420430" description="Sulfide dehydrogenase subunit alpha" evidence="3">
    <location>
        <begin position="3"/>
        <end position="474"/>
    </location>
</feature>
<feature type="binding site" evidence="1">
    <location>
        <position position="42"/>
    </location>
    <ligand>
        <name>[4Fe-4S] cluster</name>
        <dbReference type="ChEBI" id="CHEBI:49883"/>
    </ligand>
</feature>
<feature type="binding site" evidence="1">
    <location>
        <position position="45"/>
    </location>
    <ligand>
        <name>[4Fe-4S] cluster</name>
        <dbReference type="ChEBI" id="CHEBI:49883"/>
    </ligand>
</feature>
<feature type="binding site" evidence="1">
    <location>
        <position position="52"/>
    </location>
    <ligand>
        <name>[4Fe-4S] cluster</name>
        <dbReference type="ChEBI" id="CHEBI:49883"/>
    </ligand>
</feature>
<feature type="binding site" evidence="1">
    <location>
        <position position="56"/>
    </location>
    <ligand>
        <name>[4Fe-4S] cluster</name>
        <dbReference type="ChEBI" id="CHEBI:49883"/>
    </ligand>
</feature>
<feature type="binding site" evidence="1">
    <location>
        <position position="101"/>
    </location>
    <ligand>
        <name>[3Fe-4S] cluster</name>
        <dbReference type="ChEBI" id="CHEBI:21137"/>
    </ligand>
</feature>
<feature type="binding site" evidence="1">
    <location>
        <position position="107"/>
    </location>
    <ligand>
        <name>[3Fe-4S] cluster</name>
        <dbReference type="ChEBI" id="CHEBI:21137"/>
    </ligand>
</feature>
<feature type="binding site" evidence="1">
    <location>
        <position position="111"/>
    </location>
    <ligand>
        <name>[3Fe-4S] cluster</name>
        <dbReference type="ChEBI" id="CHEBI:21137"/>
    </ligand>
</feature>
<feature type="sequence conflict" description="In Ref. 2; AA sequence." evidence="8" ref="2">
    <original>E</original>
    <variation>Y</variation>
    <location>
        <position position="18"/>
    </location>
</feature>
<feature type="helix" evidence="9">
    <location>
        <begin position="16"/>
        <end position="19"/>
    </location>
</feature>
<feature type="helix" evidence="9">
    <location>
        <begin position="32"/>
        <end position="39"/>
    </location>
</feature>
<feature type="turn" evidence="9">
    <location>
        <begin position="47"/>
        <end position="49"/>
    </location>
</feature>
<feature type="helix" evidence="9">
    <location>
        <begin position="51"/>
        <end position="55"/>
    </location>
</feature>
<feature type="helix" evidence="9">
    <location>
        <begin position="62"/>
        <end position="70"/>
    </location>
</feature>
<feature type="turn" evidence="9">
    <location>
        <begin position="71"/>
        <end position="74"/>
    </location>
</feature>
<feature type="helix" evidence="9">
    <location>
        <begin position="76"/>
        <end position="88"/>
    </location>
</feature>
<feature type="helix" evidence="9">
    <location>
        <begin position="94"/>
        <end position="100"/>
    </location>
</feature>
<feature type="helix" evidence="9">
    <location>
        <begin position="103"/>
        <end position="105"/>
    </location>
</feature>
<feature type="helix" evidence="9">
    <location>
        <begin position="107"/>
        <end position="110"/>
    </location>
</feature>
<feature type="helix" evidence="9">
    <location>
        <begin position="112"/>
        <end position="115"/>
    </location>
</feature>
<feature type="helix" evidence="9">
    <location>
        <begin position="122"/>
        <end position="135"/>
    </location>
</feature>
<feature type="helix" evidence="9">
    <location>
        <begin position="138"/>
        <end position="148"/>
    </location>
</feature>
<feature type="strand" evidence="9">
    <location>
        <begin position="156"/>
        <end position="160"/>
    </location>
</feature>
<feature type="helix" evidence="9">
    <location>
        <begin position="164"/>
        <end position="175"/>
    </location>
</feature>
<feature type="strand" evidence="9">
    <location>
        <begin position="179"/>
        <end position="183"/>
    </location>
</feature>
<feature type="strand" evidence="9">
    <location>
        <begin position="185"/>
        <end position="189"/>
    </location>
</feature>
<feature type="helix" evidence="9">
    <location>
        <begin position="192"/>
        <end position="195"/>
    </location>
</feature>
<feature type="turn" evidence="9">
    <location>
        <begin position="199"/>
        <end position="201"/>
    </location>
</feature>
<feature type="helix" evidence="9">
    <location>
        <begin position="204"/>
        <end position="217"/>
    </location>
</feature>
<feature type="strand" evidence="9">
    <location>
        <begin position="220"/>
        <end position="222"/>
    </location>
</feature>
<feature type="turn" evidence="9">
    <location>
        <begin position="227"/>
        <end position="229"/>
    </location>
</feature>
<feature type="helix" evidence="9">
    <location>
        <begin position="233"/>
        <end position="239"/>
    </location>
</feature>
<feature type="strand" evidence="9">
    <location>
        <begin position="241"/>
        <end position="245"/>
    </location>
</feature>
<feature type="turn" evidence="9">
    <location>
        <begin position="258"/>
        <end position="261"/>
    </location>
</feature>
<feature type="strand" evidence="9">
    <location>
        <begin position="265"/>
        <end position="267"/>
    </location>
</feature>
<feature type="helix" evidence="9">
    <location>
        <begin position="268"/>
        <end position="276"/>
    </location>
</feature>
<feature type="helix" evidence="9">
    <location>
        <begin position="280"/>
        <end position="282"/>
    </location>
</feature>
<feature type="turn" evidence="9">
    <location>
        <begin position="283"/>
        <end position="285"/>
    </location>
</feature>
<feature type="strand" evidence="9">
    <location>
        <begin position="294"/>
        <end position="299"/>
    </location>
</feature>
<feature type="helix" evidence="9">
    <location>
        <begin position="303"/>
        <end position="314"/>
    </location>
</feature>
<feature type="strand" evidence="9">
    <location>
        <begin position="318"/>
        <end position="322"/>
    </location>
</feature>
<feature type="helix" evidence="9">
    <location>
        <begin position="327"/>
        <end position="329"/>
    </location>
</feature>
<feature type="helix" evidence="9">
    <location>
        <begin position="334"/>
        <end position="343"/>
    </location>
</feature>
<feature type="strand" evidence="9">
    <location>
        <begin position="346"/>
        <end position="348"/>
    </location>
</feature>
<feature type="strand" evidence="9">
    <location>
        <begin position="350"/>
        <end position="358"/>
    </location>
</feature>
<feature type="strand" evidence="9">
    <location>
        <begin position="362"/>
        <end position="377"/>
    </location>
</feature>
<feature type="strand" evidence="9">
    <location>
        <begin position="381"/>
        <end position="395"/>
    </location>
</feature>
<feature type="strand" evidence="9">
    <location>
        <begin position="397"/>
        <end position="401"/>
    </location>
</feature>
<feature type="helix" evidence="9">
    <location>
        <begin position="409"/>
        <end position="414"/>
    </location>
</feature>
<feature type="strand" evidence="9">
    <location>
        <begin position="439"/>
        <end position="441"/>
    </location>
</feature>
<feature type="helix" evidence="9">
    <location>
        <begin position="444"/>
        <end position="447"/>
    </location>
</feature>
<feature type="helix" evidence="9">
    <location>
        <begin position="452"/>
        <end position="471"/>
    </location>
</feature>
<reference key="1">
    <citation type="journal article" date="1999" name="Genetics">
        <title>Divergence of the hyperthermophilic archaea Pyrococcus furiosus and P. horikoshii inferred from complete genomic sequences.</title>
        <authorList>
            <person name="Maeder D.L."/>
            <person name="Weiss R.B."/>
            <person name="Dunn D.M."/>
            <person name="Cherry J.L."/>
            <person name="Gonzalez J.M."/>
            <person name="DiRuggiero J."/>
            <person name="Robb F.T."/>
        </authorList>
    </citation>
    <scope>NUCLEOTIDE SEQUENCE [LARGE SCALE GENOMIC DNA]</scope>
    <source>
        <strain>ATCC 43587 / DSM 3638 / JCM 8422 / Vc1</strain>
    </source>
</reference>
<reference key="2">
    <citation type="journal article" date="1994" name="J. Bacteriol.">
        <title>Sulfide dehydrogenase from the hyperthermophilic archaeon Pyrococcus furiosus: a new multifunctional enzyme involved in the reduction of elemental sulfur.</title>
        <authorList>
            <person name="Ma K."/>
            <person name="Adams M.W."/>
        </authorList>
    </citation>
    <scope>PROTEIN SEQUENCE OF 3-18</scope>
    <scope>FUNCTION</scope>
    <scope>CATALYTIC ACTIVITY</scope>
    <scope>COFACTOR</scope>
    <scope>SUBSTRATE SPECIFICITY</scope>
    <scope>BIOPHYSICOCHEMICAL PROPERTIES</scope>
    <scope>SUBUNIT</scope>
    <scope>SUBCELLULAR LOCATION</scope>
    <source>
        <strain evidence="3">ATCC 43587 / DSM 3638 / JCM 8422 / Vc1</strain>
    </source>
</reference>
<reference key="3">
    <citation type="journal article" date="2000" name="J. Biol. Inorg. Chem.">
        <title>Novel structure and redox chemistry of the prosthetic groups of the iron-sulfur flavoprotein sulfide dehydrogenase from Pyrococcus furiosus; evidence for a [2Fe-2S] cluster with Asp(Cys)3 ligands.</title>
        <authorList>
            <person name="Hagen W.R."/>
            <person name="Silva P.J."/>
            <person name="Amorim M.A."/>
            <person name="Hagedoorn P.L."/>
            <person name="Wassink H."/>
            <person name="Haaker H."/>
            <person name="Robb F.T."/>
        </authorList>
    </citation>
    <scope>FUNCTION</scope>
    <scope>COFACTOR</scope>
    <scope>EPR SPECTROSCOPY</scope>
    <source>
        <strain evidence="2">ATCC 43587 / DSM 3638 / JCM 8422 / Vc1</strain>
    </source>
</reference>
<reference key="4">
    <citation type="journal article" date="2001" name="Methods Enzymol.">
        <title>Ferredoxin:NADP oxidoreductase from Pyrococcus furiosus.</title>
        <authorList>
            <person name="Ma K."/>
            <person name="Adams M.W."/>
        </authorList>
    </citation>
    <scope>FUNCTION</scope>
    <scope>CATALYTIC ACTIVITY</scope>
    <scope>SUBSTRATE SPECIFICITY</scope>
    <scope>BIOPHYSICOCHEMICAL PROPERTIES</scope>
    <scope>SUBUNIT</scope>
    <source>
        <strain evidence="4">ATCC 43587 / DSM 3638 / JCM 8422 / Vc1</strain>
    </source>
</reference>
<name>SUDHA_PYRFU</name>